<sequence length="872" mass="103168">MEVLKEKVEEEEAAEREEAAERAERGEKTKRPMEVRREETTMTQEMLRDLERKLSEIEVSVPEKLLAFTKDTIDTSKLPLSYQSNTLKEEHLLQVADNFSRQYSHLCPDRVPLFLHPLNECEVPKFVSTTIRPTLMPYPELYNWDTCAQFISDFLSMVPLPDPLKPPLYLYSSTTVLKYQKGNCFDFSTLLCSMLIGAGYDAYCVNGYGSQDLCHMDLTREVCPLTMKPKESVKEEEKAPPKKYAIKPPRDLTSRFEQEQEMKRQEAIKAEEENRRKQEEARLLEQENAKTDPLHGLRVHSWVLVLSGKREVPESFFIDPFTARSYSTQDDHFLGIESLWNHKNYWVNMQDCWNCCKDLVFDLGDPVRWEYLLLGTDKPFLSLTEEEDEGMNDDDDVENLGKEDEDKSFDMPPSWVEQIEISPEAFETRCPNGKKVIQYKRAKLEKWAPYLNNNGLVCRLTTYEDLECTKTLEMKEWYQNREDMLELKHINKITGLNVDYFKPGHPQALRVHSYKSMQPEMDRVMEFYETARVDGLIKREETPKTMTEHYQGRPDFLSYRHVNFGPRMKKLALNSAESNPRPMVKITERFFRNPAKPADEDVAERVFLIAEERIQLRYHCRSDHITANKREFLRRTEVDSKGNKIIMTPDMCISFEVEPMEHTKKLLYQYEAMMKLKNEEKLSRHQAWESELEVLEILKLREEEEEAHTLTISIYDTKRNEKCKEYREAMERVLHEEHLRQVEAQLDYLAPFLAQLPPGEKLTRWQAVRLKDECLNDFKQRLIDKANLIQARFEKETQELQKKQQWYQENQVTLTPEDEDLYLSYCSQAMFRIRILEQRLSRHKELAPLKYLALEEKLYKDPRLVELLKVFV</sequence>
<feature type="chain" id="PRO_0000279433" description="Dynein regulatory complex subunit 7">
    <location>
        <begin position="1"/>
        <end position="872"/>
    </location>
</feature>
<feature type="region of interest" description="Disordered" evidence="4">
    <location>
        <begin position="1"/>
        <end position="40"/>
    </location>
</feature>
<feature type="region of interest" description="Disordered" evidence="4">
    <location>
        <begin position="231"/>
        <end position="281"/>
    </location>
</feature>
<feature type="region of interest" description="Disordered" evidence="4">
    <location>
        <begin position="385"/>
        <end position="410"/>
    </location>
</feature>
<feature type="coiled-coil region" evidence="3">
    <location>
        <begin position="1"/>
        <end position="64"/>
    </location>
</feature>
<feature type="coiled-coil region" evidence="3">
    <location>
        <begin position="254"/>
        <end position="292"/>
    </location>
</feature>
<feature type="coiled-coil region" evidence="3">
    <location>
        <begin position="676"/>
        <end position="706"/>
    </location>
</feature>
<feature type="coiled-coil region" evidence="3">
    <location>
        <begin position="780"/>
        <end position="805"/>
    </location>
</feature>
<feature type="compositionally biased region" description="Basic and acidic residues" evidence="4">
    <location>
        <begin position="16"/>
        <end position="40"/>
    </location>
</feature>
<feature type="compositionally biased region" description="Basic and acidic residues" evidence="4">
    <location>
        <begin position="231"/>
        <end position="240"/>
    </location>
</feature>
<feature type="compositionally biased region" description="Basic and acidic residues" evidence="4">
    <location>
        <begin position="248"/>
        <end position="281"/>
    </location>
</feature>
<feature type="compositionally biased region" description="Acidic residues" evidence="4">
    <location>
        <begin position="385"/>
        <end position="398"/>
    </location>
</feature>
<feature type="compositionally biased region" description="Basic and acidic residues" evidence="4">
    <location>
        <begin position="399"/>
        <end position="409"/>
    </location>
</feature>
<proteinExistence type="evidence at transcript level"/>
<keyword id="KW-0966">Cell projection</keyword>
<keyword id="KW-0969">Cilium</keyword>
<keyword id="KW-0175">Coiled coil</keyword>
<keyword id="KW-0963">Cytoplasm</keyword>
<keyword id="KW-0206">Cytoskeleton</keyword>
<keyword id="KW-0221">Differentiation</keyword>
<keyword id="KW-0282">Flagellum</keyword>
<keyword id="KW-1185">Reference proteome</keyword>
<keyword id="KW-0744">Spermatogenesis</keyword>
<gene>
    <name type="primary">DRC7</name>
    <name type="synonym">CCDC135</name>
</gene>
<name>DRC7_BOVIN</name>
<dbReference type="EMBL" id="BC111354">
    <property type="protein sequence ID" value="AAI11355.1"/>
    <property type="molecule type" value="mRNA"/>
</dbReference>
<dbReference type="RefSeq" id="NP_001033120.1">
    <property type="nucleotide sequence ID" value="NM_001038031.2"/>
</dbReference>
<dbReference type="EMDB" id="EMD-50664"/>
<dbReference type="SMR" id="Q2T9M4"/>
<dbReference type="FunCoup" id="Q2T9M4">
    <property type="interactions" value="43"/>
</dbReference>
<dbReference type="STRING" id="9913.ENSBTAP00000010526"/>
<dbReference type="PaxDb" id="9913-ENSBTAP00000010526"/>
<dbReference type="Ensembl" id="ENSBTAT00000010526.6">
    <property type="protein sequence ID" value="ENSBTAP00000010526.5"/>
    <property type="gene ID" value="ENSBTAG00000008005.7"/>
</dbReference>
<dbReference type="GeneID" id="504736"/>
<dbReference type="KEGG" id="bta:504736"/>
<dbReference type="CTD" id="84229"/>
<dbReference type="VEuPathDB" id="HostDB:ENSBTAG00000008005"/>
<dbReference type="VGNC" id="VGNC:28206">
    <property type="gene designation" value="DRC7"/>
</dbReference>
<dbReference type="eggNOG" id="ENOG502QRNZ">
    <property type="taxonomic scope" value="Eukaryota"/>
</dbReference>
<dbReference type="GeneTree" id="ENSGT00390000004913"/>
<dbReference type="HOGENOM" id="CLU_016052_0_0_1"/>
<dbReference type="InParanoid" id="Q2T9M4"/>
<dbReference type="OMA" id="CRDDYIT"/>
<dbReference type="OrthoDB" id="10262874at2759"/>
<dbReference type="TreeFam" id="TF323665"/>
<dbReference type="Proteomes" id="UP000009136">
    <property type="component" value="Chromosome 18"/>
</dbReference>
<dbReference type="Bgee" id="ENSBTAG00000008005">
    <property type="expression patterns" value="Expressed in oocyte and 25 other cell types or tissues"/>
</dbReference>
<dbReference type="GO" id="GO:0005737">
    <property type="term" value="C:cytoplasm"/>
    <property type="evidence" value="ECO:0007669"/>
    <property type="project" value="UniProtKB-KW"/>
</dbReference>
<dbReference type="GO" id="GO:0005856">
    <property type="term" value="C:cytoskeleton"/>
    <property type="evidence" value="ECO:0007669"/>
    <property type="project" value="UniProtKB-KW"/>
</dbReference>
<dbReference type="GO" id="GO:0031514">
    <property type="term" value="C:motile cilium"/>
    <property type="evidence" value="ECO:0000318"/>
    <property type="project" value="GO_Central"/>
</dbReference>
<dbReference type="GO" id="GO:0030317">
    <property type="term" value="P:flagellated sperm motility"/>
    <property type="evidence" value="ECO:0000250"/>
    <property type="project" value="UniProtKB"/>
</dbReference>
<dbReference type="GO" id="GO:0007288">
    <property type="term" value="P:sperm axoneme assembly"/>
    <property type="evidence" value="ECO:0000250"/>
    <property type="project" value="UniProtKB"/>
</dbReference>
<dbReference type="GO" id="GO:0007283">
    <property type="term" value="P:spermatogenesis"/>
    <property type="evidence" value="ECO:0000250"/>
    <property type="project" value="UniProtKB"/>
</dbReference>
<dbReference type="InterPro" id="IPR056290">
    <property type="entry name" value="CEPT76/DRC7_peptidase-like_dom"/>
</dbReference>
<dbReference type="InterPro" id="IPR033551">
    <property type="entry name" value="DRC7/lobo"/>
</dbReference>
<dbReference type="InterPro" id="IPR056292">
    <property type="entry name" value="DRC7_C"/>
</dbReference>
<dbReference type="InterPro" id="IPR056291">
    <property type="entry name" value="MORN_DRC7"/>
</dbReference>
<dbReference type="InterPro" id="IPR038765">
    <property type="entry name" value="Papain-like_cys_pep_sf"/>
</dbReference>
<dbReference type="PANTHER" id="PTHR35249">
    <property type="entry name" value="DYNEIN REGULATORY COMPLEX SUBUNIT 7"/>
    <property type="match status" value="1"/>
</dbReference>
<dbReference type="PANTHER" id="PTHR35249:SF2">
    <property type="entry name" value="DYNEIN REGULATORY COMPLEX SUBUNIT 7"/>
    <property type="match status" value="1"/>
</dbReference>
<dbReference type="Pfam" id="PF24656">
    <property type="entry name" value="CEPT76_peptidase"/>
    <property type="match status" value="1"/>
</dbReference>
<dbReference type="Pfam" id="PF24671">
    <property type="entry name" value="DRC7_C"/>
    <property type="match status" value="1"/>
</dbReference>
<dbReference type="Pfam" id="PF24667">
    <property type="entry name" value="MORN_DRC7"/>
    <property type="match status" value="1"/>
</dbReference>
<dbReference type="SUPFAM" id="SSF54001">
    <property type="entry name" value="Cysteine proteinases"/>
    <property type="match status" value="1"/>
</dbReference>
<comment type="function">
    <text evidence="1 2">Component of the nexin-dynein regulatory complex (N-DRC) a key regulator of ciliary/flagellar motility which maintains the alignment and integrity of the distal axoneme and regulates microtubule sliding in motile axonemes (By similarity). Involved in the regulation of flagellar motility (By similarity). Essential for male fertility, sperm head morphogenesis and sperm flagellum formation (By similarity).</text>
</comment>
<comment type="subunit">
    <text evidence="1 2">Component of the nexin-dynein regulatory complex (N-DRC). Interacts with TCTE1/DRC5 (By similarity). Interacts with DRC3 and GAS8/DRC4 (By similarity).</text>
</comment>
<comment type="subcellular location">
    <subcellularLocation>
        <location evidence="1">Cell projection</location>
        <location evidence="1">Cilium</location>
        <location evidence="1">Flagellum</location>
    </subcellularLocation>
    <subcellularLocation>
        <location evidence="1">Cytoplasm</location>
        <location evidence="1">Cytoskeleton</location>
        <location evidence="1">Cilium axoneme</location>
    </subcellularLocation>
    <subcellularLocation>
        <location evidence="1">Cytoplasm</location>
        <location evidence="1">Cytoskeleton</location>
        <location evidence="1">Flagellum axoneme</location>
    </subcellularLocation>
    <text evidence="1">Associated with the outer doublet microtubules (OD).</text>
</comment>
<comment type="similarity">
    <text evidence="5">Belongs to the DRC7 family.</text>
</comment>
<reference key="1">
    <citation type="submission" date="2005-12" db="EMBL/GenBank/DDBJ databases">
        <authorList>
            <consortium name="NIH - Mammalian Gene Collection (MGC) project"/>
        </authorList>
    </citation>
    <scope>NUCLEOTIDE SEQUENCE [LARGE SCALE MRNA]</scope>
    <source>
        <strain>Crossbred X Angus</strain>
        <tissue>Liver</tissue>
    </source>
</reference>
<evidence type="ECO:0000250" key="1">
    <source>
        <dbReference type="UniProtKB" id="A8JAM0"/>
    </source>
</evidence>
<evidence type="ECO:0000250" key="2">
    <source>
        <dbReference type="UniProtKB" id="Q6V3W6"/>
    </source>
</evidence>
<evidence type="ECO:0000255" key="3"/>
<evidence type="ECO:0000256" key="4">
    <source>
        <dbReference type="SAM" id="MobiDB-lite"/>
    </source>
</evidence>
<evidence type="ECO:0000305" key="5"/>
<organism>
    <name type="scientific">Bos taurus</name>
    <name type="common">Bovine</name>
    <dbReference type="NCBI Taxonomy" id="9913"/>
    <lineage>
        <taxon>Eukaryota</taxon>
        <taxon>Metazoa</taxon>
        <taxon>Chordata</taxon>
        <taxon>Craniata</taxon>
        <taxon>Vertebrata</taxon>
        <taxon>Euteleostomi</taxon>
        <taxon>Mammalia</taxon>
        <taxon>Eutheria</taxon>
        <taxon>Laurasiatheria</taxon>
        <taxon>Artiodactyla</taxon>
        <taxon>Ruminantia</taxon>
        <taxon>Pecora</taxon>
        <taxon>Bovidae</taxon>
        <taxon>Bovinae</taxon>
        <taxon>Bos</taxon>
    </lineage>
</organism>
<accession>Q2T9M4</accession>
<protein>
    <recommendedName>
        <fullName>Dynein regulatory complex subunit 7</fullName>
    </recommendedName>
    <alternativeName>
        <fullName>Coiled-coil domain-containing protein 135</fullName>
    </alternativeName>
    <alternativeName>
        <fullName>Coiled-coil domain-containing protein lobo homolog</fullName>
    </alternativeName>
</protein>